<protein>
    <recommendedName>
        <fullName evidence="1">Putative metal-dependent hydrolase GK0616</fullName>
        <ecNumber evidence="1">3.-.-.-</ecNumber>
    </recommendedName>
</protein>
<dbReference type="EC" id="3.-.-.-" evidence="1"/>
<dbReference type="EMBL" id="BA000043">
    <property type="protein sequence ID" value="BAD74901.1"/>
    <property type="molecule type" value="Genomic_DNA"/>
</dbReference>
<dbReference type="RefSeq" id="WP_011230120.1">
    <property type="nucleotide sequence ID" value="NC_006510.1"/>
</dbReference>
<dbReference type="SMR" id="Q5L2C9"/>
<dbReference type="STRING" id="235909.GK0616"/>
<dbReference type="KEGG" id="gka:GK0616"/>
<dbReference type="eggNOG" id="COG2318">
    <property type="taxonomic scope" value="Bacteria"/>
</dbReference>
<dbReference type="HOGENOM" id="CLU_105789_1_0_9"/>
<dbReference type="Proteomes" id="UP000001172">
    <property type="component" value="Chromosome"/>
</dbReference>
<dbReference type="GO" id="GO:0005737">
    <property type="term" value="C:cytoplasm"/>
    <property type="evidence" value="ECO:0007669"/>
    <property type="project" value="UniProtKB-SubCell"/>
</dbReference>
<dbReference type="GO" id="GO:0016787">
    <property type="term" value="F:hydrolase activity"/>
    <property type="evidence" value="ECO:0007669"/>
    <property type="project" value="UniProtKB-UniRule"/>
</dbReference>
<dbReference type="GO" id="GO:0008270">
    <property type="term" value="F:zinc ion binding"/>
    <property type="evidence" value="ECO:0007669"/>
    <property type="project" value="UniProtKB-UniRule"/>
</dbReference>
<dbReference type="Gene3D" id="1.20.120.450">
    <property type="entry name" value="dinb family like domain"/>
    <property type="match status" value="1"/>
</dbReference>
<dbReference type="HAMAP" id="MF_01256">
    <property type="entry name" value="YfiT_hydrol"/>
    <property type="match status" value="1"/>
</dbReference>
<dbReference type="InterPro" id="IPR024775">
    <property type="entry name" value="DinB-like"/>
</dbReference>
<dbReference type="InterPro" id="IPR034660">
    <property type="entry name" value="DinB/YfiT-like"/>
</dbReference>
<dbReference type="InterPro" id="IPR023774">
    <property type="entry name" value="Put_metal_dep_hydrolase_YfiT"/>
</dbReference>
<dbReference type="NCBIfam" id="NF009807">
    <property type="entry name" value="PRK13291.1"/>
    <property type="match status" value="1"/>
</dbReference>
<dbReference type="Pfam" id="PF12867">
    <property type="entry name" value="DinB_2"/>
    <property type="match status" value="1"/>
</dbReference>
<dbReference type="SUPFAM" id="SSF109854">
    <property type="entry name" value="DinB/YfiT-like putative metalloenzymes"/>
    <property type="match status" value="1"/>
</dbReference>
<evidence type="ECO:0000255" key="1">
    <source>
        <dbReference type="HAMAP-Rule" id="MF_01256"/>
    </source>
</evidence>
<reference key="1">
    <citation type="journal article" date="2004" name="Nucleic Acids Res.">
        <title>Thermoadaptation trait revealed by the genome sequence of thermophilic Geobacillus kaustophilus.</title>
        <authorList>
            <person name="Takami H."/>
            <person name="Takaki Y."/>
            <person name="Chee G.-J."/>
            <person name="Nishi S."/>
            <person name="Shimamura S."/>
            <person name="Suzuki H."/>
            <person name="Matsui S."/>
            <person name="Uchiyama I."/>
        </authorList>
    </citation>
    <scope>NUCLEOTIDE SEQUENCE [LARGE SCALE GENOMIC DNA]</scope>
    <source>
        <strain>HTA426</strain>
    </source>
</reference>
<name>Y616_GEOKA</name>
<feature type="chain" id="PRO_0000162376" description="Putative metal-dependent hydrolase GK0616">
    <location>
        <begin position="1"/>
        <end position="178"/>
    </location>
</feature>
<feature type="binding site" evidence="1">
    <location>
        <position position="68"/>
    </location>
    <ligand>
        <name>Zn(2+)</name>
        <dbReference type="ChEBI" id="CHEBI:29105"/>
    </ligand>
</feature>
<feature type="binding site" evidence="1">
    <location>
        <position position="161"/>
    </location>
    <ligand>
        <name>Zn(2+)</name>
        <dbReference type="ChEBI" id="CHEBI:29105"/>
    </ligand>
</feature>
<feature type="binding site" evidence="1">
    <location>
        <position position="165"/>
    </location>
    <ligand>
        <name>Zn(2+)</name>
        <dbReference type="ChEBI" id="CHEBI:29105"/>
    </ligand>
</feature>
<accession>Q5L2C9</accession>
<keyword id="KW-0963">Cytoplasm</keyword>
<keyword id="KW-0378">Hydrolase</keyword>
<keyword id="KW-0479">Metal-binding</keyword>
<keyword id="KW-1185">Reference proteome</keyword>
<keyword id="KW-0862">Zinc</keyword>
<organism>
    <name type="scientific">Geobacillus kaustophilus (strain HTA426)</name>
    <dbReference type="NCBI Taxonomy" id="235909"/>
    <lineage>
        <taxon>Bacteria</taxon>
        <taxon>Bacillati</taxon>
        <taxon>Bacillota</taxon>
        <taxon>Bacilli</taxon>
        <taxon>Bacillales</taxon>
        <taxon>Anoxybacillaceae</taxon>
        <taxon>Geobacillus</taxon>
        <taxon>Geobacillus thermoleovorans group</taxon>
    </lineage>
</organism>
<sequence length="178" mass="19713">MATVDPIRYPIGTFQAPQQFEAGEVQEWIAAIRGLPSDLRTAVSGLNDEQLNTPYREGGWTVAQVVHHLADASMNAFLRTKWGVTEDGPTVKPFAESEWAKTADACLLPIEPSLLLLDGLHARWAALLESMTEADFHRTVRPEGAAGEMPLYVLTALYAWHGKHHTAQVASLRKRKGW</sequence>
<comment type="function">
    <text evidence="1">Possible metal-dependent hydrolase.</text>
</comment>
<comment type="cofactor">
    <cofactor evidence="1">
        <name>Zn(2+)</name>
        <dbReference type="ChEBI" id="CHEBI:29105"/>
    </cofactor>
    <text evidence="1">Binds 1 zinc ion per subunit.</text>
</comment>
<comment type="subunit">
    <text evidence="1">Homodimer.</text>
</comment>
<comment type="subcellular location">
    <subcellularLocation>
        <location evidence="1">Cytoplasm</location>
    </subcellularLocation>
</comment>
<comment type="similarity">
    <text evidence="1">Belongs to the metal hydrolase YfiT family.</text>
</comment>
<gene>
    <name type="ordered locus">GK0616</name>
</gene>
<proteinExistence type="inferred from homology"/>